<gene>
    <name type="ordered locus">CENSYa_1212</name>
</gene>
<evidence type="ECO:0000305" key="1"/>
<organism>
    <name type="scientific">Cenarchaeum symbiosum (strain A)</name>
    <dbReference type="NCBI Taxonomy" id="414004"/>
    <lineage>
        <taxon>Archaea</taxon>
        <taxon>Nitrososphaerota</taxon>
        <taxon>Candidatus Cenarchaeales</taxon>
        <taxon>Candidatus Cenarchaeaceae</taxon>
        <taxon>Candidatus Cenarchaeum</taxon>
    </lineage>
</organism>
<proteinExistence type="inferred from homology"/>
<comment type="similarity">
    <text evidence="1">Belongs to the SUI1 family.</text>
</comment>
<accession>A0RWW9</accession>
<reference key="1">
    <citation type="journal article" date="2006" name="Proc. Natl. Acad. Sci. U.S.A.">
        <title>Genomic analysis of the uncultivated marine crenarchaeote Cenarchaeum symbiosum.</title>
        <authorList>
            <person name="Hallam S.J."/>
            <person name="Konstantinidis K.T."/>
            <person name="Putnam N."/>
            <person name="Schleper C."/>
            <person name="Watanabe Y."/>
            <person name="Sugahara J."/>
            <person name="Preston C."/>
            <person name="de la Torre J."/>
            <person name="Richardson P.M."/>
            <person name="DeLong E.F."/>
        </authorList>
    </citation>
    <scope>NUCLEOTIDE SEQUENCE [LARGE SCALE GENOMIC DNA]</scope>
    <source>
        <strain>A</strain>
    </source>
</reference>
<keyword id="KW-0648">Protein biosynthesis</keyword>
<keyword id="KW-1185">Reference proteome</keyword>
<keyword id="KW-0810">Translation regulation</keyword>
<sequence length="102" mass="11214">MAVICNTCGLPEDLCACGDLAKDSTKIIIRLETRRFKKKGTMIEGLDPKLNNLENVAKELKNKYACGGTAKEGYVFLQGDHRDTIKDTLVGLGFPESSIELH</sequence>
<name>SUI1_CENSY</name>
<dbReference type="EMBL" id="DP000238">
    <property type="protein sequence ID" value="ABK77836.1"/>
    <property type="molecule type" value="Genomic_DNA"/>
</dbReference>
<dbReference type="SMR" id="A0RWW9"/>
<dbReference type="STRING" id="414004.CENSYa_1212"/>
<dbReference type="EnsemblBacteria" id="ABK77836">
    <property type="protein sequence ID" value="ABK77836"/>
    <property type="gene ID" value="CENSYa_1212"/>
</dbReference>
<dbReference type="KEGG" id="csy:CENSYa_1212"/>
<dbReference type="PATRIC" id="fig|414004.10.peg.1104"/>
<dbReference type="HOGENOM" id="CLU_082805_6_1_2"/>
<dbReference type="Proteomes" id="UP000000758">
    <property type="component" value="Chromosome"/>
</dbReference>
<dbReference type="GO" id="GO:0003729">
    <property type="term" value="F:mRNA binding"/>
    <property type="evidence" value="ECO:0007669"/>
    <property type="project" value="TreeGrafter"/>
</dbReference>
<dbReference type="GO" id="GO:0003743">
    <property type="term" value="F:translation initiation factor activity"/>
    <property type="evidence" value="ECO:0007669"/>
    <property type="project" value="InterPro"/>
</dbReference>
<dbReference type="GO" id="GO:0001731">
    <property type="term" value="P:formation of translation preinitiation complex"/>
    <property type="evidence" value="ECO:0007669"/>
    <property type="project" value="TreeGrafter"/>
</dbReference>
<dbReference type="GO" id="GO:0006417">
    <property type="term" value="P:regulation of translation"/>
    <property type="evidence" value="ECO:0007669"/>
    <property type="project" value="UniProtKB-UniRule"/>
</dbReference>
<dbReference type="GO" id="GO:0002188">
    <property type="term" value="P:translation reinitiation"/>
    <property type="evidence" value="ECO:0007669"/>
    <property type="project" value="TreeGrafter"/>
</dbReference>
<dbReference type="CDD" id="cd11567">
    <property type="entry name" value="YciH_like"/>
    <property type="match status" value="1"/>
</dbReference>
<dbReference type="Gene3D" id="3.30.780.10">
    <property type="entry name" value="SUI1-like domain"/>
    <property type="match status" value="1"/>
</dbReference>
<dbReference type="InterPro" id="IPR050318">
    <property type="entry name" value="DENR/SUI1_TIF"/>
</dbReference>
<dbReference type="InterPro" id="IPR001950">
    <property type="entry name" value="SUI1"/>
</dbReference>
<dbReference type="InterPro" id="IPR022851">
    <property type="entry name" value="SUI1_arc"/>
</dbReference>
<dbReference type="InterPro" id="IPR005872">
    <property type="entry name" value="SUI1_arc_bac"/>
</dbReference>
<dbReference type="InterPro" id="IPR036877">
    <property type="entry name" value="SUI1_dom_sf"/>
</dbReference>
<dbReference type="NCBIfam" id="NF002096">
    <property type="entry name" value="PRK00939.1"/>
    <property type="match status" value="1"/>
</dbReference>
<dbReference type="PANTHER" id="PTHR12789:SF0">
    <property type="entry name" value="DENSITY-REGULATED PROTEIN"/>
    <property type="match status" value="1"/>
</dbReference>
<dbReference type="PANTHER" id="PTHR12789">
    <property type="entry name" value="DENSITY-REGULATED PROTEIN HOMOLOG"/>
    <property type="match status" value="1"/>
</dbReference>
<dbReference type="Pfam" id="PF01253">
    <property type="entry name" value="SUI1"/>
    <property type="match status" value="1"/>
</dbReference>
<dbReference type="PIRSF" id="PIRSF037511">
    <property type="entry name" value="Transl_init_SUI1_pro"/>
    <property type="match status" value="1"/>
</dbReference>
<dbReference type="SUPFAM" id="SSF55159">
    <property type="entry name" value="eIF1-like"/>
    <property type="match status" value="1"/>
</dbReference>
<dbReference type="PROSITE" id="PS50296">
    <property type="entry name" value="SUI1"/>
    <property type="match status" value="1"/>
</dbReference>
<feature type="chain" id="PRO_1000006427" description="Protein translation factor SUI1 homolog">
    <location>
        <begin position="1"/>
        <end position="102"/>
    </location>
</feature>
<protein>
    <recommendedName>
        <fullName>Protein translation factor SUI1 homolog</fullName>
    </recommendedName>
</protein>